<comment type="function">
    <text evidence="1">Activates KDO (a required 8-carbon sugar) for incorporation into bacterial lipopolysaccharide in Gram-negative bacteria.</text>
</comment>
<comment type="catalytic activity">
    <reaction evidence="1">
        <text>3-deoxy-alpha-D-manno-oct-2-ulosonate + CTP = CMP-3-deoxy-beta-D-manno-octulosonate + diphosphate</text>
        <dbReference type="Rhea" id="RHEA:23448"/>
        <dbReference type="ChEBI" id="CHEBI:33019"/>
        <dbReference type="ChEBI" id="CHEBI:37563"/>
        <dbReference type="ChEBI" id="CHEBI:85986"/>
        <dbReference type="ChEBI" id="CHEBI:85987"/>
        <dbReference type="EC" id="2.7.7.38"/>
    </reaction>
</comment>
<comment type="pathway">
    <text evidence="1">Nucleotide-sugar biosynthesis; CMP-3-deoxy-D-manno-octulosonate biosynthesis; CMP-3-deoxy-D-manno-octulosonate from 3-deoxy-D-manno-octulosonate and CTP: step 1/1.</text>
</comment>
<comment type="pathway">
    <text evidence="1">Bacterial outer membrane biogenesis; lipopolysaccharide biosynthesis.</text>
</comment>
<comment type="subcellular location">
    <subcellularLocation>
        <location evidence="1">Cytoplasm</location>
    </subcellularLocation>
</comment>
<comment type="similarity">
    <text evidence="1">Belongs to the KdsB family.</text>
</comment>
<proteinExistence type="inferred from homology"/>
<accession>Q475G0</accession>
<name>KDSB_CUPPJ</name>
<keyword id="KW-0963">Cytoplasm</keyword>
<keyword id="KW-0448">Lipopolysaccharide biosynthesis</keyword>
<keyword id="KW-0548">Nucleotidyltransferase</keyword>
<keyword id="KW-0808">Transferase</keyword>
<evidence type="ECO:0000255" key="1">
    <source>
        <dbReference type="HAMAP-Rule" id="MF_00057"/>
    </source>
</evidence>
<protein>
    <recommendedName>
        <fullName evidence="1">3-deoxy-manno-octulosonate cytidylyltransferase</fullName>
        <ecNumber evidence="1">2.7.7.38</ecNumber>
    </recommendedName>
    <alternativeName>
        <fullName evidence="1">CMP-2-keto-3-deoxyoctulosonic acid synthase</fullName>
        <shortName evidence="1">CKS</shortName>
        <shortName evidence="1">CMP-KDO synthase</shortName>
    </alternativeName>
</protein>
<sequence length="269" mass="28340">MSIPAFTVVIPARLASTRLPNKPLADIGGHPMIVRVAERAHASSAQRTVVATDAPAVAEACAAHGIDAVLTRADHPSGTDRLAEVAAQLALPDDAIVVNVQGDEPLIDPQLIDDVAMHLAHHADCAIATAAHALHDVAEVFNPNVVKVVCDAGGRALYFSRAPIPWSRDDWAGVPAVPASAAQVPLPAMPVLRHIGLYAYRAGFLRRFPTMAAAPLEQTEALEQLRAMWHGERIAVLETAAAPAPGVDTAADLERVRALWAQGMAQEGP</sequence>
<gene>
    <name evidence="1" type="primary">kdsB</name>
    <name type="ordered locus">Reut_A0591</name>
</gene>
<reference key="1">
    <citation type="journal article" date="2010" name="PLoS ONE">
        <title>The complete multipartite genome sequence of Cupriavidus necator JMP134, a versatile pollutant degrader.</title>
        <authorList>
            <person name="Lykidis A."/>
            <person name="Perez-Pantoja D."/>
            <person name="Ledger T."/>
            <person name="Mavromatis K."/>
            <person name="Anderson I.J."/>
            <person name="Ivanova N.N."/>
            <person name="Hooper S.D."/>
            <person name="Lapidus A."/>
            <person name="Lucas S."/>
            <person name="Gonzalez B."/>
            <person name="Kyrpides N.C."/>
        </authorList>
    </citation>
    <scope>NUCLEOTIDE SEQUENCE [LARGE SCALE GENOMIC DNA]</scope>
    <source>
        <strain>JMP134 / LMG 1197</strain>
    </source>
</reference>
<feature type="chain" id="PRO_0000370126" description="3-deoxy-manno-octulosonate cytidylyltransferase">
    <location>
        <begin position="1"/>
        <end position="269"/>
    </location>
</feature>
<dbReference type="EC" id="2.7.7.38" evidence="1"/>
<dbReference type="EMBL" id="CP000090">
    <property type="protein sequence ID" value="AAZ59973.1"/>
    <property type="molecule type" value="Genomic_DNA"/>
</dbReference>
<dbReference type="SMR" id="Q475G0"/>
<dbReference type="STRING" id="264198.Reut_A0591"/>
<dbReference type="KEGG" id="reu:Reut_A0591"/>
<dbReference type="eggNOG" id="COG1212">
    <property type="taxonomic scope" value="Bacteria"/>
</dbReference>
<dbReference type="HOGENOM" id="CLU_065038_1_0_4"/>
<dbReference type="OrthoDB" id="9815559at2"/>
<dbReference type="UniPathway" id="UPA00030"/>
<dbReference type="UniPathway" id="UPA00358">
    <property type="reaction ID" value="UER00476"/>
</dbReference>
<dbReference type="GO" id="GO:0005829">
    <property type="term" value="C:cytosol"/>
    <property type="evidence" value="ECO:0007669"/>
    <property type="project" value="TreeGrafter"/>
</dbReference>
<dbReference type="GO" id="GO:0008690">
    <property type="term" value="F:3-deoxy-manno-octulosonate cytidylyltransferase activity"/>
    <property type="evidence" value="ECO:0007669"/>
    <property type="project" value="UniProtKB-UniRule"/>
</dbReference>
<dbReference type="GO" id="GO:0033468">
    <property type="term" value="P:CMP-keto-3-deoxy-D-manno-octulosonic acid biosynthetic process"/>
    <property type="evidence" value="ECO:0007669"/>
    <property type="project" value="UniProtKB-UniRule"/>
</dbReference>
<dbReference type="GO" id="GO:0009103">
    <property type="term" value="P:lipopolysaccharide biosynthetic process"/>
    <property type="evidence" value="ECO:0007669"/>
    <property type="project" value="UniProtKB-UniRule"/>
</dbReference>
<dbReference type="CDD" id="cd02517">
    <property type="entry name" value="CMP-KDO-Synthetase"/>
    <property type="match status" value="1"/>
</dbReference>
<dbReference type="FunFam" id="3.90.550.10:FF:000011">
    <property type="entry name" value="3-deoxy-manno-octulosonate cytidylyltransferase"/>
    <property type="match status" value="1"/>
</dbReference>
<dbReference type="Gene3D" id="3.90.550.10">
    <property type="entry name" value="Spore Coat Polysaccharide Biosynthesis Protein SpsA, Chain A"/>
    <property type="match status" value="1"/>
</dbReference>
<dbReference type="HAMAP" id="MF_00057">
    <property type="entry name" value="KdsB"/>
    <property type="match status" value="1"/>
</dbReference>
<dbReference type="InterPro" id="IPR003329">
    <property type="entry name" value="Cytidylyl_trans"/>
</dbReference>
<dbReference type="InterPro" id="IPR004528">
    <property type="entry name" value="KdsB"/>
</dbReference>
<dbReference type="InterPro" id="IPR029044">
    <property type="entry name" value="Nucleotide-diphossugar_trans"/>
</dbReference>
<dbReference type="NCBIfam" id="TIGR00466">
    <property type="entry name" value="kdsB"/>
    <property type="match status" value="1"/>
</dbReference>
<dbReference type="NCBIfam" id="NF003952">
    <property type="entry name" value="PRK05450.1-5"/>
    <property type="match status" value="1"/>
</dbReference>
<dbReference type="NCBIfam" id="NF009905">
    <property type="entry name" value="PRK13368.1"/>
    <property type="match status" value="1"/>
</dbReference>
<dbReference type="PANTHER" id="PTHR42866">
    <property type="entry name" value="3-DEOXY-MANNO-OCTULOSONATE CYTIDYLYLTRANSFERASE"/>
    <property type="match status" value="1"/>
</dbReference>
<dbReference type="PANTHER" id="PTHR42866:SF2">
    <property type="entry name" value="3-DEOXY-MANNO-OCTULOSONATE CYTIDYLYLTRANSFERASE, MITOCHONDRIAL"/>
    <property type="match status" value="1"/>
</dbReference>
<dbReference type="Pfam" id="PF02348">
    <property type="entry name" value="CTP_transf_3"/>
    <property type="match status" value="1"/>
</dbReference>
<dbReference type="SUPFAM" id="SSF53448">
    <property type="entry name" value="Nucleotide-diphospho-sugar transferases"/>
    <property type="match status" value="1"/>
</dbReference>
<organism>
    <name type="scientific">Cupriavidus pinatubonensis (strain JMP 134 / LMG 1197)</name>
    <name type="common">Cupriavidus necator (strain JMP 134)</name>
    <dbReference type="NCBI Taxonomy" id="264198"/>
    <lineage>
        <taxon>Bacteria</taxon>
        <taxon>Pseudomonadati</taxon>
        <taxon>Pseudomonadota</taxon>
        <taxon>Betaproteobacteria</taxon>
        <taxon>Burkholderiales</taxon>
        <taxon>Burkholderiaceae</taxon>
        <taxon>Cupriavidus</taxon>
    </lineage>
</organism>